<reference key="1">
    <citation type="journal article" date="2001" name="Science">
        <title>Complete genome sequence of a virulent isolate of Streptococcus pneumoniae.</title>
        <authorList>
            <person name="Tettelin H."/>
            <person name="Nelson K.E."/>
            <person name="Paulsen I.T."/>
            <person name="Eisen J.A."/>
            <person name="Read T.D."/>
            <person name="Peterson S.N."/>
            <person name="Heidelberg J.F."/>
            <person name="DeBoy R.T."/>
            <person name="Haft D.H."/>
            <person name="Dodson R.J."/>
            <person name="Durkin A.S."/>
            <person name="Gwinn M.L."/>
            <person name="Kolonay J.F."/>
            <person name="Nelson W.C."/>
            <person name="Peterson J.D."/>
            <person name="Umayam L.A."/>
            <person name="White O."/>
            <person name="Salzberg S.L."/>
            <person name="Lewis M.R."/>
            <person name="Radune D."/>
            <person name="Holtzapple E.K."/>
            <person name="Khouri H.M."/>
            <person name="Wolf A.M."/>
            <person name="Utterback T.R."/>
            <person name="Hansen C.L."/>
            <person name="McDonald L.A."/>
            <person name="Feldblyum T.V."/>
            <person name="Angiuoli S.V."/>
            <person name="Dickinson T."/>
            <person name="Hickey E.K."/>
            <person name="Holt I.E."/>
            <person name="Loftus B.J."/>
            <person name="Yang F."/>
            <person name="Smith H.O."/>
            <person name="Venter J.C."/>
            <person name="Dougherty B.A."/>
            <person name="Morrison D.A."/>
            <person name="Hollingshead S.K."/>
            <person name="Fraser C.M."/>
        </authorList>
    </citation>
    <scope>NUCLEOTIDE SEQUENCE [LARGE SCALE GENOMIC DNA]</scope>
    <source>
        <strain>ATCC BAA-334 / TIGR4</strain>
    </source>
</reference>
<keyword id="KW-1185">Reference proteome</keyword>
<keyword id="KW-0687">Ribonucleoprotein</keyword>
<keyword id="KW-0689">Ribosomal protein</keyword>
<keyword id="KW-0694">RNA-binding</keyword>
<keyword id="KW-0699">rRNA-binding</keyword>
<protein>
    <recommendedName>
        <fullName evidence="1">Large ribosomal subunit protein bL20</fullName>
    </recommendedName>
    <alternativeName>
        <fullName evidence="2">50S ribosomal protein L20</fullName>
    </alternativeName>
</protein>
<comment type="function">
    <text evidence="1">Binds directly to 23S ribosomal RNA and is necessary for the in vitro assembly process of the 50S ribosomal subunit. It is not involved in the protein synthesizing functions of that subunit.</text>
</comment>
<comment type="similarity">
    <text evidence="1">Belongs to the bacterial ribosomal protein bL20 family.</text>
</comment>
<dbReference type="EMBL" id="AE005672">
    <property type="protein sequence ID" value="AAK75082.1"/>
    <property type="molecule type" value="Genomic_DNA"/>
</dbReference>
<dbReference type="PIR" id="A95111">
    <property type="entry name" value="A95111"/>
</dbReference>
<dbReference type="RefSeq" id="WP_000124836.1">
    <property type="nucleotide sequence ID" value="NZ_CP155539.1"/>
</dbReference>
<dbReference type="SMR" id="P66112"/>
<dbReference type="PaxDb" id="170187-SP_0961"/>
<dbReference type="DNASU" id="931131"/>
<dbReference type="EnsemblBacteria" id="AAK75082">
    <property type="protein sequence ID" value="AAK75082"/>
    <property type="gene ID" value="SP_0961"/>
</dbReference>
<dbReference type="GeneID" id="45653697"/>
<dbReference type="KEGG" id="spn:SP_0961"/>
<dbReference type="eggNOG" id="COG0292">
    <property type="taxonomic scope" value="Bacteria"/>
</dbReference>
<dbReference type="PhylomeDB" id="P66112"/>
<dbReference type="BioCyc" id="SPNE170187:G1FZB-989-MONOMER"/>
<dbReference type="Proteomes" id="UP000000585">
    <property type="component" value="Chromosome"/>
</dbReference>
<dbReference type="GO" id="GO:1990904">
    <property type="term" value="C:ribonucleoprotein complex"/>
    <property type="evidence" value="ECO:0007669"/>
    <property type="project" value="UniProtKB-KW"/>
</dbReference>
<dbReference type="GO" id="GO:0005840">
    <property type="term" value="C:ribosome"/>
    <property type="evidence" value="ECO:0007669"/>
    <property type="project" value="UniProtKB-KW"/>
</dbReference>
<dbReference type="GO" id="GO:0019843">
    <property type="term" value="F:rRNA binding"/>
    <property type="evidence" value="ECO:0007669"/>
    <property type="project" value="UniProtKB-UniRule"/>
</dbReference>
<dbReference type="GO" id="GO:0003735">
    <property type="term" value="F:structural constituent of ribosome"/>
    <property type="evidence" value="ECO:0007669"/>
    <property type="project" value="InterPro"/>
</dbReference>
<dbReference type="GO" id="GO:0000027">
    <property type="term" value="P:ribosomal large subunit assembly"/>
    <property type="evidence" value="ECO:0007669"/>
    <property type="project" value="UniProtKB-UniRule"/>
</dbReference>
<dbReference type="GO" id="GO:0006412">
    <property type="term" value="P:translation"/>
    <property type="evidence" value="ECO:0007669"/>
    <property type="project" value="InterPro"/>
</dbReference>
<dbReference type="CDD" id="cd07026">
    <property type="entry name" value="Ribosomal_L20"/>
    <property type="match status" value="1"/>
</dbReference>
<dbReference type="FunFam" id="1.10.1900.20:FF:000001">
    <property type="entry name" value="50S ribosomal protein L20"/>
    <property type="match status" value="1"/>
</dbReference>
<dbReference type="Gene3D" id="6.10.160.10">
    <property type="match status" value="1"/>
</dbReference>
<dbReference type="Gene3D" id="1.10.1900.20">
    <property type="entry name" value="Ribosomal protein L20"/>
    <property type="match status" value="1"/>
</dbReference>
<dbReference type="HAMAP" id="MF_00382">
    <property type="entry name" value="Ribosomal_bL20"/>
    <property type="match status" value="1"/>
</dbReference>
<dbReference type="InterPro" id="IPR005813">
    <property type="entry name" value="Ribosomal_bL20"/>
</dbReference>
<dbReference type="InterPro" id="IPR049946">
    <property type="entry name" value="RIBOSOMAL_L20_CS"/>
</dbReference>
<dbReference type="InterPro" id="IPR035566">
    <property type="entry name" value="Ribosomal_protein_bL20_C"/>
</dbReference>
<dbReference type="NCBIfam" id="TIGR01032">
    <property type="entry name" value="rplT_bact"/>
    <property type="match status" value="1"/>
</dbReference>
<dbReference type="PANTHER" id="PTHR10986">
    <property type="entry name" value="39S RIBOSOMAL PROTEIN L20"/>
    <property type="match status" value="1"/>
</dbReference>
<dbReference type="Pfam" id="PF00453">
    <property type="entry name" value="Ribosomal_L20"/>
    <property type="match status" value="1"/>
</dbReference>
<dbReference type="PRINTS" id="PR00062">
    <property type="entry name" value="RIBOSOMALL20"/>
</dbReference>
<dbReference type="SUPFAM" id="SSF74731">
    <property type="entry name" value="Ribosomal protein L20"/>
    <property type="match status" value="1"/>
</dbReference>
<dbReference type="PROSITE" id="PS00937">
    <property type="entry name" value="RIBOSOMAL_L20"/>
    <property type="match status" value="1"/>
</dbReference>
<feature type="chain" id="PRO_0000177238" description="Large ribosomal subunit protein bL20">
    <location>
        <begin position="1"/>
        <end position="119"/>
    </location>
</feature>
<evidence type="ECO:0000255" key="1">
    <source>
        <dbReference type="HAMAP-Rule" id="MF_00382"/>
    </source>
</evidence>
<evidence type="ECO:0000305" key="2"/>
<organism>
    <name type="scientific">Streptococcus pneumoniae serotype 4 (strain ATCC BAA-334 / TIGR4)</name>
    <dbReference type="NCBI Taxonomy" id="170187"/>
    <lineage>
        <taxon>Bacteria</taxon>
        <taxon>Bacillati</taxon>
        <taxon>Bacillota</taxon>
        <taxon>Bacilli</taxon>
        <taxon>Lactobacillales</taxon>
        <taxon>Streptococcaceae</taxon>
        <taxon>Streptococcus</taxon>
    </lineage>
</organism>
<gene>
    <name evidence="1" type="primary">rplT</name>
    <name type="ordered locus">SP_0961</name>
</gene>
<accession>P66112</accession>
<accession>Q97R68</accession>
<name>RL20_STRPN</name>
<proteinExistence type="inferred from homology"/>
<sequence>MARVKGGVVSRKRRKRILKLAKGYYGAKHILFRTAKEQVMNSYYYAYRDRRQKKRDFRKLWITRINAAARMNGLSYSQLMHGLKLAEIEVNRKMLADLAVNDAVAFTALADAAKAKLGK</sequence>